<protein>
    <recommendedName>
        <fullName evidence="1">ATP synthase subunit a</fullName>
    </recommendedName>
    <alternativeName>
        <fullName evidence="1">ATP synthase F0 sector subunit a</fullName>
    </alternativeName>
    <alternativeName>
        <fullName evidence="1">F-ATPase subunit 6</fullName>
    </alternativeName>
</protein>
<name>ATP6_EDWI9</name>
<proteinExistence type="inferred from homology"/>
<evidence type="ECO:0000255" key="1">
    <source>
        <dbReference type="HAMAP-Rule" id="MF_01393"/>
    </source>
</evidence>
<comment type="function">
    <text evidence="1">Key component of the proton channel; it plays a direct role in the translocation of protons across the membrane.</text>
</comment>
<comment type="subunit">
    <text evidence="1">F-type ATPases have 2 components, CF(1) - the catalytic core - and CF(0) - the membrane proton channel. CF(1) has five subunits: alpha(3), beta(3), gamma(1), delta(1), epsilon(1). CF(0) has three main subunits: a(1), b(2) and c(9-12). The alpha and beta chains form an alternating ring which encloses part of the gamma chain. CF(1) is attached to CF(0) by a central stalk formed by the gamma and epsilon chains, while a peripheral stalk is formed by the delta and b chains.</text>
</comment>
<comment type="subcellular location">
    <subcellularLocation>
        <location evidence="1">Cell inner membrane</location>
        <topology evidence="1">Multi-pass membrane protein</topology>
    </subcellularLocation>
</comment>
<comment type="similarity">
    <text evidence="1">Belongs to the ATPase A chain family.</text>
</comment>
<sequence length="272" mass="30416">MSAGEISTPQEYIGHHLNNLQLDLRTFELVNPHDGPASFWTLNIDSMFFSVVLGLIFLALFRKVAKNATSGVPGKFQTAVELIIGFVDGSVRDMYHGKSKLIAPLALTIFVWVFLMNLMDLVPIDFLPYIAEHWMGLPALRVVPSADVNITLSMALGVFILILFYSIKMKGVGGFVKELTLQPFNHPVFIPVNLILEGVSLLSKPVSLGLRLFGNMYAGELIFILIAGLLPWWSQWLLNVPWAIFHILIITLQAFIFMVLTIVYLSMASEEH</sequence>
<dbReference type="EMBL" id="CP001600">
    <property type="protein sequence ID" value="ACR71017.1"/>
    <property type="molecule type" value="Genomic_DNA"/>
</dbReference>
<dbReference type="RefSeq" id="WP_015873047.1">
    <property type="nucleotide sequence ID" value="NZ_CP169062.1"/>
</dbReference>
<dbReference type="SMR" id="C5BF34"/>
<dbReference type="STRING" id="67780.B6E78_11055"/>
<dbReference type="GeneID" id="69540722"/>
<dbReference type="KEGG" id="eic:NT01EI_3906"/>
<dbReference type="HOGENOM" id="CLU_041018_1_0_6"/>
<dbReference type="OrthoDB" id="9789241at2"/>
<dbReference type="Proteomes" id="UP000001485">
    <property type="component" value="Chromosome"/>
</dbReference>
<dbReference type="GO" id="GO:0005886">
    <property type="term" value="C:plasma membrane"/>
    <property type="evidence" value="ECO:0007669"/>
    <property type="project" value="UniProtKB-SubCell"/>
</dbReference>
<dbReference type="GO" id="GO:0045259">
    <property type="term" value="C:proton-transporting ATP synthase complex"/>
    <property type="evidence" value="ECO:0007669"/>
    <property type="project" value="UniProtKB-KW"/>
</dbReference>
<dbReference type="GO" id="GO:0046933">
    <property type="term" value="F:proton-transporting ATP synthase activity, rotational mechanism"/>
    <property type="evidence" value="ECO:0007669"/>
    <property type="project" value="UniProtKB-UniRule"/>
</dbReference>
<dbReference type="GO" id="GO:0042777">
    <property type="term" value="P:proton motive force-driven plasma membrane ATP synthesis"/>
    <property type="evidence" value="ECO:0007669"/>
    <property type="project" value="TreeGrafter"/>
</dbReference>
<dbReference type="CDD" id="cd00310">
    <property type="entry name" value="ATP-synt_Fo_a_6"/>
    <property type="match status" value="1"/>
</dbReference>
<dbReference type="FunFam" id="1.20.120.220:FF:000002">
    <property type="entry name" value="ATP synthase subunit a"/>
    <property type="match status" value="1"/>
</dbReference>
<dbReference type="Gene3D" id="1.20.120.220">
    <property type="entry name" value="ATP synthase, F0 complex, subunit A"/>
    <property type="match status" value="1"/>
</dbReference>
<dbReference type="HAMAP" id="MF_01393">
    <property type="entry name" value="ATP_synth_a_bact"/>
    <property type="match status" value="1"/>
</dbReference>
<dbReference type="InterPro" id="IPR045082">
    <property type="entry name" value="ATP_syn_F0_a_bact/chloroplast"/>
</dbReference>
<dbReference type="InterPro" id="IPR000568">
    <property type="entry name" value="ATP_synth_F0_asu"/>
</dbReference>
<dbReference type="InterPro" id="IPR023011">
    <property type="entry name" value="ATP_synth_F0_asu_AS"/>
</dbReference>
<dbReference type="InterPro" id="IPR035908">
    <property type="entry name" value="F0_ATP_A_sf"/>
</dbReference>
<dbReference type="NCBIfam" id="TIGR01131">
    <property type="entry name" value="ATP_synt_6_or_A"/>
    <property type="match status" value="1"/>
</dbReference>
<dbReference type="NCBIfam" id="NF004477">
    <property type="entry name" value="PRK05815.1-1"/>
    <property type="match status" value="1"/>
</dbReference>
<dbReference type="PANTHER" id="PTHR42823">
    <property type="entry name" value="ATP SYNTHASE SUBUNIT A, CHLOROPLASTIC"/>
    <property type="match status" value="1"/>
</dbReference>
<dbReference type="PANTHER" id="PTHR42823:SF3">
    <property type="entry name" value="ATP SYNTHASE SUBUNIT A, CHLOROPLASTIC"/>
    <property type="match status" value="1"/>
</dbReference>
<dbReference type="Pfam" id="PF00119">
    <property type="entry name" value="ATP-synt_A"/>
    <property type="match status" value="1"/>
</dbReference>
<dbReference type="PRINTS" id="PR00123">
    <property type="entry name" value="ATPASEA"/>
</dbReference>
<dbReference type="SUPFAM" id="SSF81336">
    <property type="entry name" value="F1F0 ATP synthase subunit A"/>
    <property type="match status" value="1"/>
</dbReference>
<dbReference type="PROSITE" id="PS00449">
    <property type="entry name" value="ATPASE_A"/>
    <property type="match status" value="1"/>
</dbReference>
<accession>C5BF34</accession>
<reference key="1">
    <citation type="submission" date="2009-03" db="EMBL/GenBank/DDBJ databases">
        <title>Complete genome sequence of Edwardsiella ictaluri 93-146.</title>
        <authorList>
            <person name="Williams M.L."/>
            <person name="Gillaspy A.F."/>
            <person name="Dyer D.W."/>
            <person name="Thune R.L."/>
            <person name="Waldbieser G.C."/>
            <person name="Schuster S.C."/>
            <person name="Gipson J."/>
            <person name="Zaitshik J."/>
            <person name="Landry C."/>
            <person name="Lawrence M.L."/>
        </authorList>
    </citation>
    <scope>NUCLEOTIDE SEQUENCE [LARGE SCALE GENOMIC DNA]</scope>
    <source>
        <strain>93-146</strain>
    </source>
</reference>
<feature type="chain" id="PRO_1000215145" description="ATP synthase subunit a">
    <location>
        <begin position="1"/>
        <end position="272"/>
    </location>
</feature>
<feature type="transmembrane region" description="Helical" evidence="1">
    <location>
        <begin position="41"/>
        <end position="61"/>
    </location>
</feature>
<feature type="transmembrane region" description="Helical" evidence="1">
    <location>
        <begin position="102"/>
        <end position="122"/>
    </location>
</feature>
<feature type="transmembrane region" description="Helical" evidence="1">
    <location>
        <begin position="147"/>
        <end position="167"/>
    </location>
</feature>
<feature type="transmembrane region" description="Helical" evidence="1">
    <location>
        <begin position="212"/>
        <end position="232"/>
    </location>
</feature>
<feature type="transmembrane region" description="Helical" evidence="1">
    <location>
        <begin position="243"/>
        <end position="263"/>
    </location>
</feature>
<organism>
    <name type="scientific">Edwardsiella ictaluri (strain 93-146)</name>
    <dbReference type="NCBI Taxonomy" id="634503"/>
    <lineage>
        <taxon>Bacteria</taxon>
        <taxon>Pseudomonadati</taxon>
        <taxon>Pseudomonadota</taxon>
        <taxon>Gammaproteobacteria</taxon>
        <taxon>Enterobacterales</taxon>
        <taxon>Hafniaceae</taxon>
        <taxon>Edwardsiella</taxon>
    </lineage>
</organism>
<gene>
    <name evidence="1" type="primary">atpB</name>
    <name type="ordered locus">NT01EI_3906</name>
</gene>
<keyword id="KW-0066">ATP synthesis</keyword>
<keyword id="KW-0997">Cell inner membrane</keyword>
<keyword id="KW-1003">Cell membrane</keyword>
<keyword id="KW-0138">CF(0)</keyword>
<keyword id="KW-0375">Hydrogen ion transport</keyword>
<keyword id="KW-0406">Ion transport</keyword>
<keyword id="KW-0472">Membrane</keyword>
<keyword id="KW-0812">Transmembrane</keyword>
<keyword id="KW-1133">Transmembrane helix</keyword>
<keyword id="KW-0813">Transport</keyword>